<name>MURI_RUEPO</name>
<proteinExistence type="inferred from homology"/>
<protein>
    <recommendedName>
        <fullName evidence="1">Glutamate racemase</fullName>
        <ecNumber evidence="1">5.1.1.3</ecNumber>
    </recommendedName>
</protein>
<sequence length="269" mass="29074">MAVGIFDSGLGGLTVLEAAQKRLPEVEFLYYADSAHAPYGVRTPDDIFQLTRAAVHDLWNRGCDLVILACNTASAAALRRMQEEGVPPGKRVLGVFVPLIEALTERQWGDNSPPREVEVKNVALFATPATVASRAFQRELAFRAIGVDVEAQACGGVVDAIEEGDLILAEALVRSHVDALKRKMPYPQAAILGCTHYPLMEPIFQDALGPDVRVFSQGNLVADSLADYLERHPNMRGSGAAGYLTTGKPATVSNRATQFLRRQITFAAA</sequence>
<feature type="chain" id="PRO_1000078574" description="Glutamate racemase">
    <location>
        <begin position="1"/>
        <end position="269"/>
    </location>
</feature>
<feature type="active site" description="Proton donor/acceptor" evidence="1">
    <location>
        <position position="70"/>
    </location>
</feature>
<feature type="active site" description="Proton donor/acceptor" evidence="1">
    <location>
        <position position="194"/>
    </location>
</feature>
<feature type="binding site" evidence="1">
    <location>
        <begin position="7"/>
        <end position="8"/>
    </location>
    <ligand>
        <name>substrate</name>
    </ligand>
</feature>
<feature type="binding site" evidence="1">
    <location>
        <begin position="39"/>
        <end position="40"/>
    </location>
    <ligand>
        <name>substrate</name>
    </ligand>
</feature>
<feature type="binding site" evidence="1">
    <location>
        <begin position="71"/>
        <end position="72"/>
    </location>
    <ligand>
        <name>substrate</name>
    </ligand>
</feature>
<feature type="binding site" evidence="1">
    <location>
        <begin position="195"/>
        <end position="196"/>
    </location>
    <ligand>
        <name>substrate</name>
    </ligand>
</feature>
<reference key="1">
    <citation type="journal article" date="2004" name="Nature">
        <title>Genome sequence of Silicibacter pomeroyi reveals adaptations to the marine environment.</title>
        <authorList>
            <person name="Moran M.A."/>
            <person name="Buchan A."/>
            <person name="Gonzalez J.M."/>
            <person name="Heidelberg J.F."/>
            <person name="Whitman W.B."/>
            <person name="Kiene R.P."/>
            <person name="Henriksen J.R."/>
            <person name="King G.M."/>
            <person name="Belas R."/>
            <person name="Fuqua C."/>
            <person name="Brinkac L.M."/>
            <person name="Lewis M."/>
            <person name="Johri S."/>
            <person name="Weaver B."/>
            <person name="Pai G."/>
            <person name="Eisen J.A."/>
            <person name="Rahe E."/>
            <person name="Sheldon W.M."/>
            <person name="Ye W."/>
            <person name="Miller T.R."/>
            <person name="Carlton J."/>
            <person name="Rasko D.A."/>
            <person name="Paulsen I.T."/>
            <person name="Ren Q."/>
            <person name="Daugherty S.C."/>
            <person name="DeBoy R.T."/>
            <person name="Dodson R.J."/>
            <person name="Durkin A.S."/>
            <person name="Madupu R."/>
            <person name="Nelson W.C."/>
            <person name="Sullivan S.A."/>
            <person name="Rosovitz M.J."/>
            <person name="Haft D.H."/>
            <person name="Selengut J."/>
            <person name="Ward N."/>
        </authorList>
    </citation>
    <scope>NUCLEOTIDE SEQUENCE [LARGE SCALE GENOMIC DNA]</scope>
    <source>
        <strain>ATCC 700808 / DSM 15171 / DSS-3</strain>
    </source>
</reference>
<reference key="2">
    <citation type="journal article" date="2014" name="Stand. Genomic Sci.">
        <title>An updated genome annotation for the model marine bacterium Ruegeria pomeroyi DSS-3.</title>
        <authorList>
            <person name="Rivers A.R."/>
            <person name="Smith C.B."/>
            <person name="Moran M.A."/>
        </authorList>
    </citation>
    <scope>GENOME REANNOTATION</scope>
    <source>
        <strain>ATCC 700808 / DSM 15171 / DSS-3</strain>
    </source>
</reference>
<comment type="function">
    <text evidence="1">Provides the (R)-glutamate required for cell wall biosynthesis.</text>
</comment>
<comment type="catalytic activity">
    <reaction evidence="1">
        <text>L-glutamate = D-glutamate</text>
        <dbReference type="Rhea" id="RHEA:12813"/>
        <dbReference type="ChEBI" id="CHEBI:29985"/>
        <dbReference type="ChEBI" id="CHEBI:29986"/>
        <dbReference type="EC" id="5.1.1.3"/>
    </reaction>
</comment>
<comment type="pathway">
    <text evidence="1">Cell wall biogenesis; peptidoglycan biosynthesis.</text>
</comment>
<comment type="similarity">
    <text evidence="1">Belongs to the aspartate/glutamate racemases family.</text>
</comment>
<accession>Q5LS93</accession>
<keyword id="KW-0133">Cell shape</keyword>
<keyword id="KW-0961">Cell wall biogenesis/degradation</keyword>
<keyword id="KW-0413">Isomerase</keyword>
<keyword id="KW-0573">Peptidoglycan synthesis</keyword>
<keyword id="KW-1185">Reference proteome</keyword>
<dbReference type="EC" id="5.1.1.3" evidence="1"/>
<dbReference type="EMBL" id="CP000031">
    <property type="protein sequence ID" value="AAV95154.1"/>
    <property type="molecule type" value="Genomic_DNA"/>
</dbReference>
<dbReference type="RefSeq" id="WP_011047608.1">
    <property type="nucleotide sequence ID" value="NC_003911.12"/>
</dbReference>
<dbReference type="SMR" id="Q5LS93"/>
<dbReference type="STRING" id="246200.SPO1875"/>
<dbReference type="PaxDb" id="246200-SPO1875"/>
<dbReference type="KEGG" id="sil:SPO1875"/>
<dbReference type="eggNOG" id="COG0796">
    <property type="taxonomic scope" value="Bacteria"/>
</dbReference>
<dbReference type="HOGENOM" id="CLU_052344_0_3_5"/>
<dbReference type="OrthoDB" id="9801055at2"/>
<dbReference type="UniPathway" id="UPA00219"/>
<dbReference type="Proteomes" id="UP000001023">
    <property type="component" value="Chromosome"/>
</dbReference>
<dbReference type="GO" id="GO:0008881">
    <property type="term" value="F:glutamate racemase activity"/>
    <property type="evidence" value="ECO:0007669"/>
    <property type="project" value="UniProtKB-UniRule"/>
</dbReference>
<dbReference type="GO" id="GO:0071555">
    <property type="term" value="P:cell wall organization"/>
    <property type="evidence" value="ECO:0007669"/>
    <property type="project" value="UniProtKB-KW"/>
</dbReference>
<dbReference type="GO" id="GO:0009252">
    <property type="term" value="P:peptidoglycan biosynthetic process"/>
    <property type="evidence" value="ECO:0007669"/>
    <property type="project" value="UniProtKB-UniRule"/>
</dbReference>
<dbReference type="GO" id="GO:0008360">
    <property type="term" value="P:regulation of cell shape"/>
    <property type="evidence" value="ECO:0007669"/>
    <property type="project" value="UniProtKB-KW"/>
</dbReference>
<dbReference type="Gene3D" id="3.40.50.1860">
    <property type="match status" value="2"/>
</dbReference>
<dbReference type="HAMAP" id="MF_00258">
    <property type="entry name" value="Glu_racemase"/>
    <property type="match status" value="1"/>
</dbReference>
<dbReference type="InterPro" id="IPR015942">
    <property type="entry name" value="Asp/Glu/hydantoin_racemase"/>
</dbReference>
<dbReference type="InterPro" id="IPR001920">
    <property type="entry name" value="Asp/Glu_race"/>
</dbReference>
<dbReference type="InterPro" id="IPR018187">
    <property type="entry name" value="Asp/Glu_racemase_AS_1"/>
</dbReference>
<dbReference type="InterPro" id="IPR004391">
    <property type="entry name" value="Glu_race"/>
</dbReference>
<dbReference type="NCBIfam" id="TIGR00067">
    <property type="entry name" value="glut_race"/>
    <property type="match status" value="1"/>
</dbReference>
<dbReference type="PANTHER" id="PTHR21198">
    <property type="entry name" value="GLUTAMATE RACEMASE"/>
    <property type="match status" value="1"/>
</dbReference>
<dbReference type="PANTHER" id="PTHR21198:SF2">
    <property type="entry name" value="GLUTAMATE RACEMASE"/>
    <property type="match status" value="1"/>
</dbReference>
<dbReference type="Pfam" id="PF01177">
    <property type="entry name" value="Asp_Glu_race"/>
    <property type="match status" value="1"/>
</dbReference>
<dbReference type="SUPFAM" id="SSF53681">
    <property type="entry name" value="Aspartate/glutamate racemase"/>
    <property type="match status" value="2"/>
</dbReference>
<dbReference type="PROSITE" id="PS00923">
    <property type="entry name" value="ASP_GLU_RACEMASE_1"/>
    <property type="match status" value="1"/>
</dbReference>
<organism>
    <name type="scientific">Ruegeria pomeroyi (strain ATCC 700808 / DSM 15171 / DSS-3)</name>
    <name type="common">Silicibacter pomeroyi</name>
    <dbReference type="NCBI Taxonomy" id="246200"/>
    <lineage>
        <taxon>Bacteria</taxon>
        <taxon>Pseudomonadati</taxon>
        <taxon>Pseudomonadota</taxon>
        <taxon>Alphaproteobacteria</taxon>
        <taxon>Rhodobacterales</taxon>
        <taxon>Roseobacteraceae</taxon>
        <taxon>Ruegeria</taxon>
    </lineage>
</organism>
<gene>
    <name evidence="1" type="primary">murI</name>
    <name type="ordered locus">SPO1875</name>
</gene>
<evidence type="ECO:0000255" key="1">
    <source>
        <dbReference type="HAMAP-Rule" id="MF_00258"/>
    </source>
</evidence>